<accession>B1MYD0</accession>
<keyword id="KW-0028">Amino-acid biosynthesis</keyword>
<keyword id="KW-0057">Aromatic amino acid biosynthesis</keyword>
<keyword id="KW-0274">FAD</keyword>
<keyword id="KW-0285">Flavoprotein</keyword>
<keyword id="KW-0288">FMN</keyword>
<keyword id="KW-0456">Lyase</keyword>
<keyword id="KW-0521">NADP</keyword>
<keyword id="KW-1185">Reference proteome</keyword>
<evidence type="ECO:0000255" key="1">
    <source>
        <dbReference type="HAMAP-Rule" id="MF_00300"/>
    </source>
</evidence>
<reference key="1">
    <citation type="journal article" date="2008" name="J. Bacteriol.">
        <title>Complete genome sequence of Leuconostoc citreum KM20.</title>
        <authorList>
            <person name="Kim J.F."/>
            <person name="Jeong H."/>
            <person name="Lee J.-S."/>
            <person name="Choi S.-H."/>
            <person name="Ha M."/>
            <person name="Hur C.-G."/>
            <person name="Kim J.-S."/>
            <person name="Lee S."/>
            <person name="Park H.-S."/>
            <person name="Park Y.-H."/>
            <person name="Oh T.K."/>
        </authorList>
    </citation>
    <scope>NUCLEOTIDE SEQUENCE [LARGE SCALE GENOMIC DNA]</scope>
    <source>
        <strain>KM20</strain>
    </source>
</reference>
<comment type="function">
    <text evidence="1">Catalyzes the anti-1,4-elimination of the C-3 phosphate and the C-6 proR hydrogen from 5-enolpyruvylshikimate-3-phosphate (EPSP) to yield chorismate, which is the branch point compound that serves as the starting substrate for the three terminal pathways of aromatic amino acid biosynthesis. This reaction introduces a second double bond into the aromatic ring system.</text>
</comment>
<comment type="catalytic activity">
    <reaction evidence="1">
        <text>5-O-(1-carboxyvinyl)-3-phosphoshikimate = chorismate + phosphate</text>
        <dbReference type="Rhea" id="RHEA:21020"/>
        <dbReference type="ChEBI" id="CHEBI:29748"/>
        <dbReference type="ChEBI" id="CHEBI:43474"/>
        <dbReference type="ChEBI" id="CHEBI:57701"/>
        <dbReference type="EC" id="4.2.3.5"/>
    </reaction>
</comment>
<comment type="cofactor">
    <cofactor evidence="1">
        <name>FMNH2</name>
        <dbReference type="ChEBI" id="CHEBI:57618"/>
    </cofactor>
    <text evidence="1">Reduced FMN (FMNH(2)).</text>
</comment>
<comment type="pathway">
    <text evidence="1">Metabolic intermediate biosynthesis; chorismate biosynthesis; chorismate from D-erythrose 4-phosphate and phosphoenolpyruvate: step 7/7.</text>
</comment>
<comment type="subunit">
    <text evidence="1">Homotetramer.</text>
</comment>
<comment type="similarity">
    <text evidence="1">Belongs to the chorismate synthase family.</text>
</comment>
<organism>
    <name type="scientific">Leuconostoc citreum (strain KM20)</name>
    <dbReference type="NCBI Taxonomy" id="349519"/>
    <lineage>
        <taxon>Bacteria</taxon>
        <taxon>Bacillati</taxon>
        <taxon>Bacillota</taxon>
        <taxon>Bacilli</taxon>
        <taxon>Lactobacillales</taxon>
        <taxon>Lactobacillaceae</taxon>
        <taxon>Leuconostoc</taxon>
    </lineage>
</organism>
<sequence length="392" mass="42773">MRYTTAGESHGPEEIAVIEGIPAGLHITQEDVNAQLARRQKGYGRGERQKIETDTVTFLTGIRHQKTLGSPITLNVHNDDHNNWSKIMAPNEPQTSENSLRKVLRPRPGHADLVGGIKYRHHDDLRNVLERSSARETTMRVAVGAVAKKLLAEIGVDVHGFVVNVGPAKSDLSTLTQYQDLEALRQVTESFETRALDAAADKAIRDVIDSTKRDANTVGGQVQVMATGVPVGLGSYISADDKLDAKIARAIVGINAFKGVQFGGGFDNAEKYGDQVMDEIFWRPEKGFYRGSDNLGGFEGGMTTGEAIVVRGVVKPIPTLYRPMQSVDIDTHQDHRASIERSDTTAVTAAAVIAEAMVAIELAKAVLDKFDADNIDRMKEQVAAYRQEVKAF</sequence>
<gene>
    <name evidence="1" type="primary">aroC</name>
    <name type="ordered locus">LCK_00700</name>
</gene>
<dbReference type="EC" id="4.2.3.5" evidence="1"/>
<dbReference type="EMBL" id="DQ489736">
    <property type="protein sequence ID" value="ACA82532.1"/>
    <property type="molecule type" value="Genomic_DNA"/>
</dbReference>
<dbReference type="RefSeq" id="WP_004899822.1">
    <property type="nucleotide sequence ID" value="NC_010471.1"/>
</dbReference>
<dbReference type="SMR" id="B1MYD0"/>
<dbReference type="STRING" id="349519.LCK_00700"/>
<dbReference type="KEGG" id="lci:LCK_00700"/>
<dbReference type="eggNOG" id="COG0082">
    <property type="taxonomic scope" value="Bacteria"/>
</dbReference>
<dbReference type="HOGENOM" id="CLU_034547_2_0_9"/>
<dbReference type="OrthoDB" id="9771806at2"/>
<dbReference type="UniPathway" id="UPA00053">
    <property type="reaction ID" value="UER00090"/>
</dbReference>
<dbReference type="Proteomes" id="UP000002166">
    <property type="component" value="Chromosome"/>
</dbReference>
<dbReference type="GO" id="GO:0005829">
    <property type="term" value="C:cytosol"/>
    <property type="evidence" value="ECO:0007669"/>
    <property type="project" value="TreeGrafter"/>
</dbReference>
<dbReference type="GO" id="GO:0004107">
    <property type="term" value="F:chorismate synthase activity"/>
    <property type="evidence" value="ECO:0007669"/>
    <property type="project" value="UniProtKB-UniRule"/>
</dbReference>
<dbReference type="GO" id="GO:0010181">
    <property type="term" value="F:FMN binding"/>
    <property type="evidence" value="ECO:0007669"/>
    <property type="project" value="TreeGrafter"/>
</dbReference>
<dbReference type="GO" id="GO:0008652">
    <property type="term" value="P:amino acid biosynthetic process"/>
    <property type="evidence" value="ECO:0007669"/>
    <property type="project" value="UniProtKB-KW"/>
</dbReference>
<dbReference type="GO" id="GO:0009073">
    <property type="term" value="P:aromatic amino acid family biosynthetic process"/>
    <property type="evidence" value="ECO:0007669"/>
    <property type="project" value="UniProtKB-KW"/>
</dbReference>
<dbReference type="GO" id="GO:0009423">
    <property type="term" value="P:chorismate biosynthetic process"/>
    <property type="evidence" value="ECO:0007669"/>
    <property type="project" value="UniProtKB-UniRule"/>
</dbReference>
<dbReference type="CDD" id="cd07304">
    <property type="entry name" value="Chorismate_synthase"/>
    <property type="match status" value="1"/>
</dbReference>
<dbReference type="FunFam" id="3.60.150.10:FF:000002">
    <property type="entry name" value="Chorismate synthase"/>
    <property type="match status" value="1"/>
</dbReference>
<dbReference type="Gene3D" id="3.60.150.10">
    <property type="entry name" value="Chorismate synthase AroC"/>
    <property type="match status" value="1"/>
</dbReference>
<dbReference type="HAMAP" id="MF_00300">
    <property type="entry name" value="Chorismate_synth"/>
    <property type="match status" value="1"/>
</dbReference>
<dbReference type="InterPro" id="IPR000453">
    <property type="entry name" value="Chorismate_synth"/>
</dbReference>
<dbReference type="InterPro" id="IPR035904">
    <property type="entry name" value="Chorismate_synth_AroC_sf"/>
</dbReference>
<dbReference type="InterPro" id="IPR020541">
    <property type="entry name" value="Chorismate_synthase_CS"/>
</dbReference>
<dbReference type="NCBIfam" id="TIGR00033">
    <property type="entry name" value="aroC"/>
    <property type="match status" value="1"/>
</dbReference>
<dbReference type="NCBIfam" id="NF003793">
    <property type="entry name" value="PRK05382.1"/>
    <property type="match status" value="1"/>
</dbReference>
<dbReference type="PANTHER" id="PTHR21085">
    <property type="entry name" value="CHORISMATE SYNTHASE"/>
    <property type="match status" value="1"/>
</dbReference>
<dbReference type="PANTHER" id="PTHR21085:SF0">
    <property type="entry name" value="CHORISMATE SYNTHASE"/>
    <property type="match status" value="1"/>
</dbReference>
<dbReference type="Pfam" id="PF01264">
    <property type="entry name" value="Chorismate_synt"/>
    <property type="match status" value="1"/>
</dbReference>
<dbReference type="PIRSF" id="PIRSF001456">
    <property type="entry name" value="Chorismate_synth"/>
    <property type="match status" value="1"/>
</dbReference>
<dbReference type="SUPFAM" id="SSF103263">
    <property type="entry name" value="Chorismate synthase, AroC"/>
    <property type="match status" value="1"/>
</dbReference>
<dbReference type="PROSITE" id="PS00788">
    <property type="entry name" value="CHORISMATE_SYNTHASE_2"/>
    <property type="match status" value="1"/>
</dbReference>
<name>AROC_LEUCK</name>
<protein>
    <recommendedName>
        <fullName evidence="1">Chorismate synthase</fullName>
        <shortName evidence="1">CS</shortName>
        <ecNumber evidence="1">4.2.3.5</ecNumber>
    </recommendedName>
    <alternativeName>
        <fullName evidence="1">5-enolpyruvylshikimate-3-phosphate phospholyase</fullName>
    </alternativeName>
</protein>
<proteinExistence type="inferred from homology"/>
<feature type="chain" id="PRO_1000115366" description="Chorismate synthase">
    <location>
        <begin position="1"/>
        <end position="392"/>
    </location>
</feature>
<feature type="binding site" evidence="1">
    <location>
        <position position="39"/>
    </location>
    <ligand>
        <name>NADP(+)</name>
        <dbReference type="ChEBI" id="CHEBI:58349"/>
    </ligand>
</feature>
<feature type="binding site" evidence="1">
    <location>
        <position position="45"/>
    </location>
    <ligand>
        <name>NADP(+)</name>
        <dbReference type="ChEBI" id="CHEBI:58349"/>
    </ligand>
</feature>
<feature type="binding site" evidence="1">
    <location>
        <begin position="131"/>
        <end position="133"/>
    </location>
    <ligand>
        <name>FMN</name>
        <dbReference type="ChEBI" id="CHEBI:58210"/>
    </ligand>
</feature>
<feature type="binding site" evidence="1">
    <location>
        <begin position="255"/>
        <end position="256"/>
    </location>
    <ligand>
        <name>FMN</name>
        <dbReference type="ChEBI" id="CHEBI:58210"/>
    </ligand>
</feature>
<feature type="binding site" evidence="1">
    <location>
        <position position="300"/>
    </location>
    <ligand>
        <name>FMN</name>
        <dbReference type="ChEBI" id="CHEBI:58210"/>
    </ligand>
</feature>
<feature type="binding site" evidence="1">
    <location>
        <begin position="315"/>
        <end position="319"/>
    </location>
    <ligand>
        <name>FMN</name>
        <dbReference type="ChEBI" id="CHEBI:58210"/>
    </ligand>
</feature>
<feature type="binding site" evidence="1">
    <location>
        <position position="341"/>
    </location>
    <ligand>
        <name>FMN</name>
        <dbReference type="ChEBI" id="CHEBI:58210"/>
    </ligand>
</feature>